<organism>
    <name type="scientific">Paralichthys olivaceus</name>
    <name type="common">Bastard halibut</name>
    <name type="synonym">Hippoglossus olivaceus</name>
    <dbReference type="NCBI Taxonomy" id="8255"/>
    <lineage>
        <taxon>Eukaryota</taxon>
        <taxon>Metazoa</taxon>
        <taxon>Chordata</taxon>
        <taxon>Craniata</taxon>
        <taxon>Vertebrata</taxon>
        <taxon>Euteleostomi</taxon>
        <taxon>Actinopterygii</taxon>
        <taxon>Neopterygii</taxon>
        <taxon>Teleostei</taxon>
        <taxon>Neoteleostei</taxon>
        <taxon>Acanthomorphata</taxon>
        <taxon>Carangaria</taxon>
        <taxon>Pleuronectiformes</taxon>
        <taxon>Pleuronectoidei</taxon>
        <taxon>Paralichthyidae</taxon>
        <taxon>Paralichthys</taxon>
    </lineage>
</organism>
<accession>Q90WF4</accession>
<reference key="1">
    <citation type="journal article" date="2002" name="Gen. Comp. Endocrinol.">
        <title>Development of neuropeptide Y-related peptides in the digestive organs during the larval stage of Japanese flounder, Paralichthys olivaceus.</title>
        <authorList>
            <person name="Kurokawa T."/>
            <person name="Suzuki T."/>
        </authorList>
    </citation>
    <scope>NUCLEOTIDE SEQUENCE [MRNA]</scope>
    <source>
        <tissue>Brain</tissue>
    </source>
</reference>
<protein>
    <recommendedName>
        <fullName>Pro-neuropeptide Y</fullName>
    </recommendedName>
    <component>
        <recommendedName>
            <fullName>Neuropeptide Y</fullName>
        </recommendedName>
        <alternativeName>
            <fullName>Neuropeptide tyrosine</fullName>
            <shortName>NPY</shortName>
        </alternativeName>
    </component>
    <component>
        <recommendedName>
            <fullName>C-flanking peptide of NPY</fullName>
            <shortName>CPON</shortName>
        </recommendedName>
    </component>
</protein>
<name>NPY_PAROL</name>
<dbReference type="EMBL" id="AB055211">
    <property type="protein sequence ID" value="BAB62409.1"/>
    <property type="molecule type" value="mRNA"/>
</dbReference>
<dbReference type="GO" id="GO:0005615">
    <property type="term" value="C:extracellular space"/>
    <property type="evidence" value="ECO:0007669"/>
    <property type="project" value="TreeGrafter"/>
</dbReference>
<dbReference type="GO" id="GO:0005184">
    <property type="term" value="F:neuropeptide hormone activity"/>
    <property type="evidence" value="ECO:0007669"/>
    <property type="project" value="TreeGrafter"/>
</dbReference>
<dbReference type="GO" id="GO:0031841">
    <property type="term" value="F:neuropeptide Y receptor binding"/>
    <property type="evidence" value="ECO:0007669"/>
    <property type="project" value="TreeGrafter"/>
</dbReference>
<dbReference type="GO" id="GO:0007631">
    <property type="term" value="P:feeding behavior"/>
    <property type="evidence" value="ECO:0007669"/>
    <property type="project" value="TreeGrafter"/>
</dbReference>
<dbReference type="GO" id="GO:0007218">
    <property type="term" value="P:neuropeptide signaling pathway"/>
    <property type="evidence" value="ECO:0007669"/>
    <property type="project" value="UniProtKB-KW"/>
</dbReference>
<dbReference type="CDD" id="cd00126">
    <property type="entry name" value="PAH"/>
    <property type="match status" value="1"/>
</dbReference>
<dbReference type="Gene3D" id="6.10.250.900">
    <property type="match status" value="1"/>
</dbReference>
<dbReference type="InterPro" id="IPR001955">
    <property type="entry name" value="Pancreatic_hormone-like"/>
</dbReference>
<dbReference type="InterPro" id="IPR020392">
    <property type="entry name" value="Pancreatic_hormone-like_CS"/>
</dbReference>
<dbReference type="PANTHER" id="PTHR10533">
    <property type="entry name" value="NEUROPEPTIDE Y/PANCREATIC HORMONE/PEPTIDE YY"/>
    <property type="match status" value="1"/>
</dbReference>
<dbReference type="PANTHER" id="PTHR10533:SF5">
    <property type="entry name" value="PRO-NEUROPEPTIDE Y"/>
    <property type="match status" value="1"/>
</dbReference>
<dbReference type="Pfam" id="PF00159">
    <property type="entry name" value="Hormone_3"/>
    <property type="match status" value="1"/>
</dbReference>
<dbReference type="PRINTS" id="PR00278">
    <property type="entry name" value="PANCHORMONE"/>
</dbReference>
<dbReference type="SMART" id="SM00309">
    <property type="entry name" value="PAH"/>
    <property type="match status" value="1"/>
</dbReference>
<dbReference type="PROSITE" id="PS00265">
    <property type="entry name" value="PANCREATIC_HORMONE_1"/>
    <property type="match status" value="1"/>
</dbReference>
<dbReference type="PROSITE" id="PS50276">
    <property type="entry name" value="PANCREATIC_HORMONE_2"/>
    <property type="match status" value="1"/>
</dbReference>
<evidence type="ECO:0000250" key="1"/>
<evidence type="ECO:0000305" key="2"/>
<comment type="function">
    <text evidence="1">NPY is implicated in the control of feeding and in secretion of gonadotrophin-release hormone.</text>
</comment>
<comment type="subcellular location">
    <subcellularLocation>
        <location>Secreted</location>
    </subcellularLocation>
</comment>
<comment type="similarity">
    <text evidence="2">Belongs to the NPY family.</text>
</comment>
<keyword id="KW-0027">Amidation</keyword>
<keyword id="KW-0165">Cleavage on pair of basic residues</keyword>
<keyword id="KW-0527">Neuropeptide</keyword>
<keyword id="KW-0964">Secreted</keyword>
<keyword id="KW-0732">Signal</keyword>
<proteinExistence type="inferred from homology"/>
<gene>
    <name type="primary">npy</name>
</gene>
<feature type="signal peptide" evidence="1">
    <location>
        <begin position="1"/>
        <end position="28"/>
    </location>
</feature>
<feature type="peptide" id="PRO_0000025347" description="Neuropeptide Y">
    <location>
        <begin position="29"/>
        <end position="64"/>
    </location>
</feature>
<feature type="peptide" id="PRO_0000025348" description="C-flanking peptide of NPY">
    <location>
        <begin position="68"/>
        <end position="99"/>
    </location>
</feature>
<feature type="modified residue" description="Tyrosine amide" evidence="1">
    <location>
        <position position="64"/>
    </location>
</feature>
<sequence>MHPNLVSWLGTLGLLLWALLCLSALTEGYPVKPENPGDDAPAEELAKYYSALRHYINLITRQRYGKRSSPEILDTLVSELLLKESTDTLPQSRYDPSLW</sequence>